<organism>
    <name type="scientific">Klebsiella pneumoniae (strain 342)</name>
    <dbReference type="NCBI Taxonomy" id="507522"/>
    <lineage>
        <taxon>Bacteria</taxon>
        <taxon>Pseudomonadati</taxon>
        <taxon>Pseudomonadota</taxon>
        <taxon>Gammaproteobacteria</taxon>
        <taxon>Enterobacterales</taxon>
        <taxon>Enterobacteriaceae</taxon>
        <taxon>Klebsiella/Raoultella group</taxon>
        <taxon>Klebsiella</taxon>
        <taxon>Klebsiella pneumoniae complex</taxon>
    </lineage>
</organism>
<accession>B5XVN4</accession>
<protein>
    <recommendedName>
        <fullName evidence="1">Succinyl-diaminopimelate desuccinylase</fullName>
        <shortName evidence="1">SDAP desuccinylase</shortName>
        <ecNumber evidence="1">3.5.1.18</ecNumber>
    </recommendedName>
    <alternativeName>
        <fullName evidence="1">N-succinyl-LL-2,6-diaminoheptanedioate amidohydrolase</fullName>
    </alternativeName>
</protein>
<gene>
    <name evidence="1" type="primary">dapE</name>
    <name type="ordered locus">KPK_1331</name>
</gene>
<dbReference type="EC" id="3.5.1.18" evidence="1"/>
<dbReference type="EMBL" id="CP000964">
    <property type="protein sequence ID" value="ACI09547.1"/>
    <property type="molecule type" value="Genomic_DNA"/>
</dbReference>
<dbReference type="SMR" id="B5XVN4"/>
<dbReference type="MEROPS" id="M20.010"/>
<dbReference type="KEGG" id="kpe:KPK_1331"/>
<dbReference type="HOGENOM" id="CLU_021802_4_0_6"/>
<dbReference type="UniPathway" id="UPA00034">
    <property type="reaction ID" value="UER00021"/>
</dbReference>
<dbReference type="Proteomes" id="UP000001734">
    <property type="component" value="Chromosome"/>
</dbReference>
<dbReference type="GO" id="GO:0008777">
    <property type="term" value="F:acetylornithine deacetylase activity"/>
    <property type="evidence" value="ECO:0007669"/>
    <property type="project" value="TreeGrafter"/>
</dbReference>
<dbReference type="GO" id="GO:0050897">
    <property type="term" value="F:cobalt ion binding"/>
    <property type="evidence" value="ECO:0007669"/>
    <property type="project" value="UniProtKB-UniRule"/>
</dbReference>
<dbReference type="GO" id="GO:0009014">
    <property type="term" value="F:succinyl-diaminopimelate desuccinylase activity"/>
    <property type="evidence" value="ECO:0007669"/>
    <property type="project" value="UniProtKB-UniRule"/>
</dbReference>
<dbReference type="GO" id="GO:0008270">
    <property type="term" value="F:zinc ion binding"/>
    <property type="evidence" value="ECO:0007669"/>
    <property type="project" value="UniProtKB-UniRule"/>
</dbReference>
<dbReference type="GO" id="GO:0019877">
    <property type="term" value="P:diaminopimelate biosynthetic process"/>
    <property type="evidence" value="ECO:0007669"/>
    <property type="project" value="UniProtKB-UniRule"/>
</dbReference>
<dbReference type="GO" id="GO:0006526">
    <property type="term" value="P:L-arginine biosynthetic process"/>
    <property type="evidence" value="ECO:0007669"/>
    <property type="project" value="TreeGrafter"/>
</dbReference>
<dbReference type="GO" id="GO:0009089">
    <property type="term" value="P:lysine biosynthetic process via diaminopimelate"/>
    <property type="evidence" value="ECO:0007669"/>
    <property type="project" value="UniProtKB-UniRule"/>
</dbReference>
<dbReference type="CDD" id="cd03891">
    <property type="entry name" value="M20_DapE_proteobac"/>
    <property type="match status" value="1"/>
</dbReference>
<dbReference type="FunFam" id="3.30.70.360:FF:000011">
    <property type="entry name" value="Succinyl-diaminopimelate desuccinylase"/>
    <property type="match status" value="1"/>
</dbReference>
<dbReference type="FunFam" id="3.40.630.10:FF:000005">
    <property type="entry name" value="Succinyl-diaminopimelate desuccinylase"/>
    <property type="match status" value="1"/>
</dbReference>
<dbReference type="FunFam" id="3.40.630.10:FF:000010">
    <property type="entry name" value="Succinyl-diaminopimelate desuccinylase"/>
    <property type="match status" value="1"/>
</dbReference>
<dbReference type="Gene3D" id="3.40.630.10">
    <property type="entry name" value="Zn peptidases"/>
    <property type="match status" value="2"/>
</dbReference>
<dbReference type="HAMAP" id="MF_01690">
    <property type="entry name" value="DapE"/>
    <property type="match status" value="1"/>
</dbReference>
<dbReference type="InterPro" id="IPR001261">
    <property type="entry name" value="ArgE/DapE_CS"/>
</dbReference>
<dbReference type="InterPro" id="IPR036264">
    <property type="entry name" value="Bact_exopeptidase_dim_dom"/>
</dbReference>
<dbReference type="InterPro" id="IPR005941">
    <property type="entry name" value="DapE_proteobac"/>
</dbReference>
<dbReference type="InterPro" id="IPR002933">
    <property type="entry name" value="Peptidase_M20"/>
</dbReference>
<dbReference type="InterPro" id="IPR011650">
    <property type="entry name" value="Peptidase_M20_dimer"/>
</dbReference>
<dbReference type="InterPro" id="IPR050072">
    <property type="entry name" value="Peptidase_M20A"/>
</dbReference>
<dbReference type="NCBIfam" id="TIGR01246">
    <property type="entry name" value="dapE_proteo"/>
    <property type="match status" value="1"/>
</dbReference>
<dbReference type="NCBIfam" id="NF009557">
    <property type="entry name" value="PRK13009.1"/>
    <property type="match status" value="1"/>
</dbReference>
<dbReference type="PANTHER" id="PTHR43808">
    <property type="entry name" value="ACETYLORNITHINE DEACETYLASE"/>
    <property type="match status" value="1"/>
</dbReference>
<dbReference type="PANTHER" id="PTHR43808:SF31">
    <property type="entry name" value="N-ACETYL-L-CITRULLINE DEACETYLASE"/>
    <property type="match status" value="1"/>
</dbReference>
<dbReference type="Pfam" id="PF07687">
    <property type="entry name" value="M20_dimer"/>
    <property type="match status" value="1"/>
</dbReference>
<dbReference type="Pfam" id="PF01546">
    <property type="entry name" value="Peptidase_M20"/>
    <property type="match status" value="1"/>
</dbReference>
<dbReference type="SUPFAM" id="SSF55031">
    <property type="entry name" value="Bacterial exopeptidase dimerisation domain"/>
    <property type="match status" value="1"/>
</dbReference>
<dbReference type="SUPFAM" id="SSF53187">
    <property type="entry name" value="Zn-dependent exopeptidases"/>
    <property type="match status" value="1"/>
</dbReference>
<dbReference type="PROSITE" id="PS00758">
    <property type="entry name" value="ARGE_DAPE_CPG2_1"/>
    <property type="match status" value="1"/>
</dbReference>
<dbReference type="PROSITE" id="PS00759">
    <property type="entry name" value="ARGE_DAPE_CPG2_2"/>
    <property type="match status" value="1"/>
</dbReference>
<feature type="chain" id="PRO_0000375596" description="Succinyl-diaminopimelate desuccinylase">
    <location>
        <begin position="1"/>
        <end position="375"/>
    </location>
</feature>
<feature type="active site" evidence="1">
    <location>
        <position position="68"/>
    </location>
</feature>
<feature type="active site" description="Proton acceptor" evidence="1">
    <location>
        <position position="133"/>
    </location>
</feature>
<feature type="binding site" evidence="1">
    <location>
        <position position="66"/>
    </location>
    <ligand>
        <name>Zn(2+)</name>
        <dbReference type="ChEBI" id="CHEBI:29105"/>
        <label>1</label>
    </ligand>
</feature>
<feature type="binding site" evidence="1">
    <location>
        <position position="99"/>
    </location>
    <ligand>
        <name>Zn(2+)</name>
        <dbReference type="ChEBI" id="CHEBI:29105"/>
        <label>1</label>
    </ligand>
</feature>
<feature type="binding site" evidence="1">
    <location>
        <position position="99"/>
    </location>
    <ligand>
        <name>Zn(2+)</name>
        <dbReference type="ChEBI" id="CHEBI:29105"/>
        <label>2</label>
    </ligand>
</feature>
<feature type="binding site" evidence="1">
    <location>
        <position position="134"/>
    </location>
    <ligand>
        <name>Zn(2+)</name>
        <dbReference type="ChEBI" id="CHEBI:29105"/>
        <label>2</label>
    </ligand>
</feature>
<feature type="binding site" evidence="1">
    <location>
        <position position="162"/>
    </location>
    <ligand>
        <name>Zn(2+)</name>
        <dbReference type="ChEBI" id="CHEBI:29105"/>
        <label>1</label>
    </ligand>
</feature>
<feature type="binding site" evidence="1">
    <location>
        <position position="348"/>
    </location>
    <ligand>
        <name>Zn(2+)</name>
        <dbReference type="ChEBI" id="CHEBI:29105"/>
        <label>2</label>
    </ligand>
</feature>
<sequence length="375" mass="41329">MSCPVIELAQQLIRRPSLSPDDAGCQALMIERLRAIGFTVEPMDFGDTQNFWAWRGHGETLAFAGHTDVVPAGDADRWINPPFEPTIRDGMLFGRGAADMKGSLAAMVVAAERFVAQYPNHRGRLAFLITSDEEASAKNGTVKVVETLMARNERLDYCLVGEPSSTEVVGDVVKNGRRGSLTCNLTIHGVQGHVAYPHLADNPVHRAAPMLAELVNIEWDKGNEFFPPTSMQIANVQSGTGSNNVIPGDMFVQFNFRFSTELTDEMIKARVVSLLEKYQLRYSVEWWLSGQPFLTGRGKLVDAVVSAIEHYNEIKPQLLTNGGTSDGRFIARMGAQVVELGPVNATIHKINECVNAADLQLLARMYQRVMEQLVA</sequence>
<name>DAPE_KLEP3</name>
<proteinExistence type="inferred from homology"/>
<comment type="function">
    <text evidence="1">Catalyzes the hydrolysis of N-succinyl-L,L-diaminopimelic acid (SDAP), forming succinate and LL-2,6-diaminopimelate (DAP), an intermediate involved in the bacterial biosynthesis of lysine and meso-diaminopimelic acid, an essential component of bacterial cell walls.</text>
</comment>
<comment type="catalytic activity">
    <reaction evidence="1">
        <text>N-succinyl-(2S,6S)-2,6-diaminopimelate + H2O = (2S,6S)-2,6-diaminopimelate + succinate</text>
        <dbReference type="Rhea" id="RHEA:22608"/>
        <dbReference type="ChEBI" id="CHEBI:15377"/>
        <dbReference type="ChEBI" id="CHEBI:30031"/>
        <dbReference type="ChEBI" id="CHEBI:57609"/>
        <dbReference type="ChEBI" id="CHEBI:58087"/>
        <dbReference type="EC" id="3.5.1.18"/>
    </reaction>
</comment>
<comment type="cofactor">
    <cofactor evidence="1">
        <name>Zn(2+)</name>
        <dbReference type="ChEBI" id="CHEBI:29105"/>
    </cofactor>
    <cofactor evidence="1">
        <name>Co(2+)</name>
        <dbReference type="ChEBI" id="CHEBI:48828"/>
    </cofactor>
    <text evidence="1">Binds 2 Zn(2+) or Co(2+) ions per subunit.</text>
</comment>
<comment type="pathway">
    <text evidence="1">Amino-acid biosynthesis; L-lysine biosynthesis via DAP pathway; LL-2,6-diaminopimelate from (S)-tetrahydrodipicolinate (succinylase route): step 3/3.</text>
</comment>
<comment type="subunit">
    <text evidence="1">Homodimer.</text>
</comment>
<comment type="similarity">
    <text evidence="1">Belongs to the peptidase M20A family. DapE subfamily.</text>
</comment>
<reference key="1">
    <citation type="journal article" date="2008" name="PLoS Genet.">
        <title>Complete genome sequence of the N2-fixing broad host range endophyte Klebsiella pneumoniae 342 and virulence predictions verified in mice.</title>
        <authorList>
            <person name="Fouts D.E."/>
            <person name="Tyler H.L."/>
            <person name="DeBoy R.T."/>
            <person name="Daugherty S."/>
            <person name="Ren Q."/>
            <person name="Badger J.H."/>
            <person name="Durkin A.S."/>
            <person name="Huot H."/>
            <person name="Shrivastava S."/>
            <person name="Kothari S."/>
            <person name="Dodson R.J."/>
            <person name="Mohamoud Y."/>
            <person name="Khouri H."/>
            <person name="Roesch L.F.W."/>
            <person name="Krogfelt K.A."/>
            <person name="Struve C."/>
            <person name="Triplett E.W."/>
            <person name="Methe B.A."/>
        </authorList>
    </citation>
    <scope>NUCLEOTIDE SEQUENCE [LARGE SCALE GENOMIC DNA]</scope>
    <source>
        <strain>342</strain>
    </source>
</reference>
<keyword id="KW-0028">Amino-acid biosynthesis</keyword>
<keyword id="KW-0170">Cobalt</keyword>
<keyword id="KW-0220">Diaminopimelate biosynthesis</keyword>
<keyword id="KW-0378">Hydrolase</keyword>
<keyword id="KW-0457">Lysine biosynthesis</keyword>
<keyword id="KW-0479">Metal-binding</keyword>
<keyword id="KW-0862">Zinc</keyword>
<evidence type="ECO:0000255" key="1">
    <source>
        <dbReference type="HAMAP-Rule" id="MF_01690"/>
    </source>
</evidence>